<name>SSRP_TROWT</name>
<proteinExistence type="inferred from homology"/>
<gene>
    <name evidence="1" type="primary">smpB</name>
    <name type="ordered locus">TWT_201</name>
</gene>
<reference key="1">
    <citation type="journal article" date="2003" name="Genome Res.">
        <title>Tropheryma whipplei twist: a human pathogenic Actinobacteria with a reduced genome.</title>
        <authorList>
            <person name="Raoult D."/>
            <person name="Ogata H."/>
            <person name="Audic S."/>
            <person name="Robert C."/>
            <person name="Suhre K."/>
            <person name="Drancourt M."/>
            <person name="Claverie J.-M."/>
        </authorList>
    </citation>
    <scope>NUCLEOTIDE SEQUENCE [LARGE SCALE GENOMIC DNA]</scope>
    <source>
        <strain>Twist</strain>
    </source>
</reference>
<accession>Q83N13</accession>
<sequence length="211" mass="24786">MHRRSSKSYSSRNSKIPERSKIPDCVIASNKSAEYNYFLDKTFEAGLVLLGSEVKSVRQQKISLSEAYIYEDNSEIWLANLYIPEHKTGGWTNHNPRRLRKLLLHKYQIARLRKDLLIPGITLVPIKFYFRNGRAKLLIALARGKKLIDKREVIKEREATLEANRALKHRLRRPRAQRNTQRSVTPRRTRENKNVRGSKARSARRNVRREN</sequence>
<protein>
    <recommendedName>
        <fullName evidence="1">SsrA-binding protein</fullName>
    </recommendedName>
    <alternativeName>
        <fullName evidence="1">Small protein B</fullName>
    </alternativeName>
</protein>
<comment type="function">
    <text evidence="1">Required for rescue of stalled ribosomes mediated by trans-translation. Binds to transfer-messenger RNA (tmRNA), required for stable association of tmRNA with ribosomes. tmRNA and SmpB together mimic tRNA shape, replacing the anticodon stem-loop with SmpB. tmRNA is encoded by the ssrA gene; the 2 termini fold to resemble tRNA(Ala) and it encodes a 'tag peptide', a short internal open reading frame. During trans-translation Ala-aminoacylated tmRNA acts like a tRNA, entering the A-site of stalled ribosomes, displacing the stalled mRNA. The ribosome then switches to translate the ORF on the tmRNA; the nascent peptide is terminated with the 'tag peptide' encoded by the tmRNA and targeted for degradation. The ribosome is freed to recommence translation, which seems to be the essential function of trans-translation.</text>
</comment>
<comment type="subcellular location">
    <subcellularLocation>
        <location evidence="1">Cytoplasm</location>
    </subcellularLocation>
    <text evidence="1">The tmRNA-SmpB complex associates with stalled 70S ribosomes.</text>
</comment>
<comment type="similarity">
    <text evidence="1">Belongs to the SmpB family.</text>
</comment>
<keyword id="KW-0963">Cytoplasm</keyword>
<keyword id="KW-1185">Reference proteome</keyword>
<keyword id="KW-0694">RNA-binding</keyword>
<organism>
    <name type="scientific">Tropheryma whipplei (strain Twist)</name>
    <name type="common">Whipple's bacillus</name>
    <dbReference type="NCBI Taxonomy" id="203267"/>
    <lineage>
        <taxon>Bacteria</taxon>
        <taxon>Bacillati</taxon>
        <taxon>Actinomycetota</taxon>
        <taxon>Actinomycetes</taxon>
        <taxon>Micrococcales</taxon>
        <taxon>Tropherymataceae</taxon>
        <taxon>Tropheryma</taxon>
    </lineage>
</organism>
<dbReference type="EMBL" id="AE014184">
    <property type="protein sequence ID" value="AAO44298.1"/>
    <property type="molecule type" value="Genomic_DNA"/>
</dbReference>
<dbReference type="RefSeq" id="WP_011102424.1">
    <property type="nucleotide sequence ID" value="NC_004572.3"/>
</dbReference>
<dbReference type="SMR" id="Q83N13"/>
<dbReference type="STRING" id="203267.TWT_201"/>
<dbReference type="KEGG" id="twh:TWT_201"/>
<dbReference type="eggNOG" id="COG0691">
    <property type="taxonomic scope" value="Bacteria"/>
</dbReference>
<dbReference type="HOGENOM" id="CLU_108953_2_0_11"/>
<dbReference type="OrthoDB" id="9805462at2"/>
<dbReference type="Proteomes" id="UP000002200">
    <property type="component" value="Chromosome"/>
</dbReference>
<dbReference type="GO" id="GO:0005829">
    <property type="term" value="C:cytosol"/>
    <property type="evidence" value="ECO:0007669"/>
    <property type="project" value="TreeGrafter"/>
</dbReference>
<dbReference type="GO" id="GO:0003723">
    <property type="term" value="F:RNA binding"/>
    <property type="evidence" value="ECO:0007669"/>
    <property type="project" value="UniProtKB-UniRule"/>
</dbReference>
<dbReference type="GO" id="GO:0070929">
    <property type="term" value="P:trans-translation"/>
    <property type="evidence" value="ECO:0007669"/>
    <property type="project" value="UniProtKB-UniRule"/>
</dbReference>
<dbReference type="CDD" id="cd09294">
    <property type="entry name" value="SmpB"/>
    <property type="match status" value="1"/>
</dbReference>
<dbReference type="Gene3D" id="2.40.280.10">
    <property type="match status" value="1"/>
</dbReference>
<dbReference type="HAMAP" id="MF_00023">
    <property type="entry name" value="SmpB"/>
    <property type="match status" value="1"/>
</dbReference>
<dbReference type="InterPro" id="IPR023620">
    <property type="entry name" value="SmpB"/>
</dbReference>
<dbReference type="InterPro" id="IPR000037">
    <property type="entry name" value="SsrA-bd_prot"/>
</dbReference>
<dbReference type="InterPro" id="IPR020081">
    <property type="entry name" value="SsrA-bd_prot_CS"/>
</dbReference>
<dbReference type="NCBIfam" id="NF003843">
    <property type="entry name" value="PRK05422.1"/>
    <property type="match status" value="1"/>
</dbReference>
<dbReference type="NCBIfam" id="TIGR00086">
    <property type="entry name" value="smpB"/>
    <property type="match status" value="1"/>
</dbReference>
<dbReference type="PANTHER" id="PTHR30308:SF2">
    <property type="entry name" value="SSRA-BINDING PROTEIN"/>
    <property type="match status" value="1"/>
</dbReference>
<dbReference type="PANTHER" id="PTHR30308">
    <property type="entry name" value="TMRNA-BINDING COMPONENT OF TRANS-TRANSLATION TAGGING COMPLEX"/>
    <property type="match status" value="1"/>
</dbReference>
<dbReference type="Pfam" id="PF01668">
    <property type="entry name" value="SmpB"/>
    <property type="match status" value="1"/>
</dbReference>
<dbReference type="SUPFAM" id="SSF74982">
    <property type="entry name" value="Small protein B (SmpB)"/>
    <property type="match status" value="1"/>
</dbReference>
<dbReference type="PROSITE" id="PS01317">
    <property type="entry name" value="SSRP"/>
    <property type="match status" value="1"/>
</dbReference>
<feature type="chain" id="PRO_0000103061" description="SsrA-binding protein">
    <location>
        <begin position="1"/>
        <end position="211"/>
    </location>
</feature>
<feature type="region of interest" description="Disordered" evidence="2">
    <location>
        <begin position="168"/>
        <end position="211"/>
    </location>
</feature>
<feature type="compositionally biased region" description="Polar residues" evidence="2">
    <location>
        <begin position="177"/>
        <end position="186"/>
    </location>
</feature>
<feature type="compositionally biased region" description="Basic residues" evidence="2">
    <location>
        <begin position="196"/>
        <end position="211"/>
    </location>
</feature>
<evidence type="ECO:0000255" key="1">
    <source>
        <dbReference type="HAMAP-Rule" id="MF_00023"/>
    </source>
</evidence>
<evidence type="ECO:0000256" key="2">
    <source>
        <dbReference type="SAM" id="MobiDB-lite"/>
    </source>
</evidence>